<feature type="initiator methionine" description="Removed" evidence="8">
    <location>
        <position position="1"/>
    </location>
</feature>
<feature type="chain" id="PRO_0000067367" description="Fatty acid-binding protein, adipocyte" evidence="8">
    <location>
        <begin position="2"/>
        <end position="132"/>
    </location>
</feature>
<feature type="short sequence motif" description="Nuclear localization signal" evidence="6">
    <location>
        <begin position="22"/>
        <end position="32"/>
    </location>
</feature>
<feature type="binding site">
    <location>
        <begin position="127"/>
        <end position="129"/>
    </location>
    <ligand>
        <name>a fatty acid</name>
        <dbReference type="ChEBI" id="CHEBI:28868"/>
    </ligand>
</feature>
<feature type="modified residue" description="N-acetylcysteine" evidence="2">
    <location>
        <position position="2"/>
    </location>
</feature>
<feature type="modified residue" description="Phosphoserine" evidence="12">
    <location>
        <position position="13"/>
    </location>
</feature>
<feature type="modified residue" description="Phosphotyrosine; by Tyr-kinases" evidence="1">
    <location>
        <position position="20"/>
    </location>
</feature>
<feature type="mutagenesis site" description="Abolishes ligand-induced translocation to the nucleus; when associated with A-31 and A-32." evidence="6">
    <original>K</original>
    <variation>A</variation>
    <location>
        <position position="22"/>
    </location>
</feature>
<feature type="mutagenesis site" description="Abolishes ligand-induced translocation to the nucleus; when associated with A-22 and A-32." evidence="6">
    <original>R</original>
    <variation>A</variation>
    <location>
        <position position="31"/>
    </location>
</feature>
<feature type="mutagenesis site" description="Abolishes ligand-induced translocation to the nucleus; when associated with A-22 and A-31." evidence="6">
    <original>K</original>
    <variation>A</variation>
    <location>
        <position position="32"/>
    </location>
</feature>
<feature type="mutagenesis site" description="Abolishes ligand-induced translocation to the nucleus." evidence="7">
    <original>F</original>
    <variation>A</variation>
    <location>
        <position position="58"/>
    </location>
</feature>
<feature type="mutagenesis site" description="Abolishes export from nucleus; when associated with A-87 and A-92." evidence="6 7">
    <original>L</original>
    <variation>A</variation>
    <location>
        <position position="67"/>
    </location>
</feature>
<feature type="mutagenesis site" description="Abolishes export from nucleus; when associated with A-67 and A-92." evidence="6 7">
    <original>L</original>
    <variation>A</variation>
    <location>
        <position position="87"/>
    </location>
</feature>
<feature type="mutagenesis site" description="Abolishes export from nucleus; when associated with A-67 and A-87." evidence="6 7">
    <original>L</original>
    <variation>A</variation>
    <location>
        <position position="92"/>
    </location>
</feature>
<feature type="sequence conflict" description="In Ref. 1; AAA39870." evidence="11" ref="1">
    <original>N</original>
    <variation>T</variation>
    <location>
        <position position="40"/>
    </location>
</feature>
<feature type="sequence conflict" description="In Ref. 2; AAA39417." evidence="11" ref="2">
    <original>G</original>
    <variation>V</variation>
    <location>
        <position position="111"/>
    </location>
</feature>
<feature type="helix" evidence="14">
    <location>
        <begin position="3"/>
        <end position="5"/>
    </location>
</feature>
<feature type="strand" evidence="14">
    <location>
        <begin position="7"/>
        <end position="16"/>
    </location>
</feature>
<feature type="helix" evidence="14">
    <location>
        <begin position="17"/>
        <end position="24"/>
    </location>
</feature>
<feature type="helix" evidence="14">
    <location>
        <begin position="28"/>
        <end position="36"/>
    </location>
</feature>
<feature type="strand" evidence="14">
    <location>
        <begin position="40"/>
        <end position="46"/>
    </location>
</feature>
<feature type="strand" evidence="14">
    <location>
        <begin position="49"/>
        <end position="58"/>
    </location>
</feature>
<feature type="strand" evidence="14">
    <location>
        <begin position="60"/>
        <end position="66"/>
    </location>
</feature>
<feature type="strand" evidence="13">
    <location>
        <begin position="67"/>
        <end position="69"/>
    </location>
</feature>
<feature type="strand" evidence="14">
    <location>
        <begin position="71"/>
        <end position="74"/>
    </location>
</feature>
<feature type="strand" evidence="14">
    <location>
        <begin position="80"/>
        <end position="88"/>
    </location>
</feature>
<feature type="strand" evidence="14">
    <location>
        <begin position="91"/>
        <end position="98"/>
    </location>
</feature>
<feature type="strand" evidence="14">
    <location>
        <begin position="101"/>
        <end position="110"/>
    </location>
</feature>
<feature type="strand" evidence="14">
    <location>
        <begin position="113"/>
        <end position="120"/>
    </location>
</feature>
<feature type="strand" evidence="14">
    <location>
        <begin position="123"/>
        <end position="131"/>
    </location>
</feature>
<organism>
    <name type="scientific">Mus musculus</name>
    <name type="common">Mouse</name>
    <dbReference type="NCBI Taxonomy" id="10090"/>
    <lineage>
        <taxon>Eukaryota</taxon>
        <taxon>Metazoa</taxon>
        <taxon>Chordata</taxon>
        <taxon>Craniata</taxon>
        <taxon>Vertebrata</taxon>
        <taxon>Euteleostomi</taxon>
        <taxon>Mammalia</taxon>
        <taxon>Eutheria</taxon>
        <taxon>Euarchontoglires</taxon>
        <taxon>Glires</taxon>
        <taxon>Rodentia</taxon>
        <taxon>Myomorpha</taxon>
        <taxon>Muroidea</taxon>
        <taxon>Muridae</taxon>
        <taxon>Murinae</taxon>
        <taxon>Mus</taxon>
        <taxon>Mus</taxon>
    </lineage>
</organism>
<reference key="1">
    <citation type="journal article" date="1984" name="Proc. Natl. Acad. Sci. U.S.A.">
        <title>Expression of specific mRNAs during adipose differentiation: identification of an mRNA encoding a homologue of myelin P2 protein.</title>
        <authorList>
            <person name="Bernlohr D.A."/>
            <person name="Angus C.W."/>
            <person name="Lane M.D."/>
            <person name="Bolanowski M.A."/>
            <person name="Kelly T.J. Jr."/>
        </authorList>
    </citation>
    <scope>NUCLEOTIDE SEQUENCE [MRNA]</scope>
</reference>
<reference key="2">
    <citation type="journal article" date="1986" name="Proc. Natl. Acad. Sci. U.S.A.">
        <title>Adipocyte P2 gene: developmental expression and homology of 5'-flanking sequences among fat cell-specific genes.</title>
        <authorList>
            <person name="Hunt C.R."/>
            <person name="Ro J.H.-S."/>
            <person name="Dobson D.E."/>
            <person name="Min H.Y."/>
            <person name="Spiegelman B.M."/>
        </authorList>
    </citation>
    <scope>NUCLEOTIDE SEQUENCE [GENOMIC DNA]</scope>
</reference>
<reference key="3">
    <citation type="journal article" date="1986" name="J. Biol. Chem.">
        <title>The nucleotide sequence of three genes participating in the adipose differentiation of 3T3 cells.</title>
        <authorList>
            <person name="Phillips M."/>
            <person name="Djian P."/>
            <person name="Green H."/>
        </authorList>
    </citation>
    <scope>NUCLEOTIDE SEQUENCE [GENOMIC DNA]</scope>
</reference>
<reference key="4">
    <citation type="journal article" date="2005" name="Science">
        <title>The transcriptional landscape of the mammalian genome.</title>
        <authorList>
            <person name="Carninci P."/>
            <person name="Kasukawa T."/>
            <person name="Katayama S."/>
            <person name="Gough J."/>
            <person name="Frith M.C."/>
            <person name="Maeda N."/>
            <person name="Oyama R."/>
            <person name="Ravasi T."/>
            <person name="Lenhard B."/>
            <person name="Wells C."/>
            <person name="Kodzius R."/>
            <person name="Shimokawa K."/>
            <person name="Bajic V.B."/>
            <person name="Brenner S.E."/>
            <person name="Batalov S."/>
            <person name="Forrest A.R."/>
            <person name="Zavolan M."/>
            <person name="Davis M.J."/>
            <person name="Wilming L.G."/>
            <person name="Aidinis V."/>
            <person name="Allen J.E."/>
            <person name="Ambesi-Impiombato A."/>
            <person name="Apweiler R."/>
            <person name="Aturaliya R.N."/>
            <person name="Bailey T.L."/>
            <person name="Bansal M."/>
            <person name="Baxter L."/>
            <person name="Beisel K.W."/>
            <person name="Bersano T."/>
            <person name="Bono H."/>
            <person name="Chalk A.M."/>
            <person name="Chiu K.P."/>
            <person name="Choudhary V."/>
            <person name="Christoffels A."/>
            <person name="Clutterbuck D.R."/>
            <person name="Crowe M.L."/>
            <person name="Dalla E."/>
            <person name="Dalrymple B.P."/>
            <person name="de Bono B."/>
            <person name="Della Gatta G."/>
            <person name="di Bernardo D."/>
            <person name="Down T."/>
            <person name="Engstrom P."/>
            <person name="Fagiolini M."/>
            <person name="Faulkner G."/>
            <person name="Fletcher C.F."/>
            <person name="Fukushima T."/>
            <person name="Furuno M."/>
            <person name="Futaki S."/>
            <person name="Gariboldi M."/>
            <person name="Georgii-Hemming P."/>
            <person name="Gingeras T.R."/>
            <person name="Gojobori T."/>
            <person name="Green R.E."/>
            <person name="Gustincich S."/>
            <person name="Harbers M."/>
            <person name="Hayashi Y."/>
            <person name="Hensch T.K."/>
            <person name="Hirokawa N."/>
            <person name="Hill D."/>
            <person name="Huminiecki L."/>
            <person name="Iacono M."/>
            <person name="Ikeo K."/>
            <person name="Iwama A."/>
            <person name="Ishikawa T."/>
            <person name="Jakt M."/>
            <person name="Kanapin A."/>
            <person name="Katoh M."/>
            <person name="Kawasawa Y."/>
            <person name="Kelso J."/>
            <person name="Kitamura H."/>
            <person name="Kitano H."/>
            <person name="Kollias G."/>
            <person name="Krishnan S.P."/>
            <person name="Kruger A."/>
            <person name="Kummerfeld S.K."/>
            <person name="Kurochkin I.V."/>
            <person name="Lareau L.F."/>
            <person name="Lazarevic D."/>
            <person name="Lipovich L."/>
            <person name="Liu J."/>
            <person name="Liuni S."/>
            <person name="McWilliam S."/>
            <person name="Madan Babu M."/>
            <person name="Madera M."/>
            <person name="Marchionni L."/>
            <person name="Matsuda H."/>
            <person name="Matsuzawa S."/>
            <person name="Miki H."/>
            <person name="Mignone F."/>
            <person name="Miyake S."/>
            <person name="Morris K."/>
            <person name="Mottagui-Tabar S."/>
            <person name="Mulder N."/>
            <person name="Nakano N."/>
            <person name="Nakauchi H."/>
            <person name="Ng P."/>
            <person name="Nilsson R."/>
            <person name="Nishiguchi S."/>
            <person name="Nishikawa S."/>
            <person name="Nori F."/>
            <person name="Ohara O."/>
            <person name="Okazaki Y."/>
            <person name="Orlando V."/>
            <person name="Pang K.C."/>
            <person name="Pavan W.J."/>
            <person name="Pavesi G."/>
            <person name="Pesole G."/>
            <person name="Petrovsky N."/>
            <person name="Piazza S."/>
            <person name="Reed J."/>
            <person name="Reid J.F."/>
            <person name="Ring B.Z."/>
            <person name="Ringwald M."/>
            <person name="Rost B."/>
            <person name="Ruan Y."/>
            <person name="Salzberg S.L."/>
            <person name="Sandelin A."/>
            <person name="Schneider C."/>
            <person name="Schoenbach C."/>
            <person name="Sekiguchi K."/>
            <person name="Semple C.A."/>
            <person name="Seno S."/>
            <person name="Sessa L."/>
            <person name="Sheng Y."/>
            <person name="Shibata Y."/>
            <person name="Shimada H."/>
            <person name="Shimada K."/>
            <person name="Silva D."/>
            <person name="Sinclair B."/>
            <person name="Sperling S."/>
            <person name="Stupka E."/>
            <person name="Sugiura K."/>
            <person name="Sultana R."/>
            <person name="Takenaka Y."/>
            <person name="Taki K."/>
            <person name="Tammoja K."/>
            <person name="Tan S.L."/>
            <person name="Tang S."/>
            <person name="Taylor M.S."/>
            <person name="Tegner J."/>
            <person name="Teichmann S.A."/>
            <person name="Ueda H.R."/>
            <person name="van Nimwegen E."/>
            <person name="Verardo R."/>
            <person name="Wei C.L."/>
            <person name="Yagi K."/>
            <person name="Yamanishi H."/>
            <person name="Zabarovsky E."/>
            <person name="Zhu S."/>
            <person name="Zimmer A."/>
            <person name="Hide W."/>
            <person name="Bult C."/>
            <person name="Grimmond S.M."/>
            <person name="Teasdale R.D."/>
            <person name="Liu E.T."/>
            <person name="Brusic V."/>
            <person name="Quackenbush J."/>
            <person name="Wahlestedt C."/>
            <person name="Mattick J.S."/>
            <person name="Hume D.A."/>
            <person name="Kai C."/>
            <person name="Sasaki D."/>
            <person name="Tomaru Y."/>
            <person name="Fukuda S."/>
            <person name="Kanamori-Katayama M."/>
            <person name="Suzuki M."/>
            <person name="Aoki J."/>
            <person name="Arakawa T."/>
            <person name="Iida J."/>
            <person name="Imamura K."/>
            <person name="Itoh M."/>
            <person name="Kato T."/>
            <person name="Kawaji H."/>
            <person name="Kawagashira N."/>
            <person name="Kawashima T."/>
            <person name="Kojima M."/>
            <person name="Kondo S."/>
            <person name="Konno H."/>
            <person name="Nakano K."/>
            <person name="Ninomiya N."/>
            <person name="Nishio T."/>
            <person name="Okada M."/>
            <person name="Plessy C."/>
            <person name="Shibata K."/>
            <person name="Shiraki T."/>
            <person name="Suzuki S."/>
            <person name="Tagami M."/>
            <person name="Waki K."/>
            <person name="Watahiki A."/>
            <person name="Okamura-Oho Y."/>
            <person name="Suzuki H."/>
            <person name="Kawai J."/>
            <person name="Hayashizaki Y."/>
        </authorList>
    </citation>
    <scope>NUCLEOTIDE SEQUENCE [LARGE SCALE MRNA]</scope>
    <source>
        <strain>C57BL/6J</strain>
    </source>
</reference>
<reference key="5">
    <citation type="journal article" date="2004" name="Genome Res.">
        <title>The status, quality, and expansion of the NIH full-length cDNA project: the Mammalian Gene Collection (MGC).</title>
        <authorList>
            <consortium name="The MGC Project Team"/>
        </authorList>
    </citation>
    <scope>NUCLEOTIDE SEQUENCE [LARGE SCALE MRNA]</scope>
    <source>
        <strain>C57BL/6J</strain>
        <tissue>Mammary gland</tissue>
    </source>
</reference>
<reference key="6">
    <citation type="journal article" date="1988" name="J. Biol. Chem.">
        <title>Purification of murine adipocyte lipid-binding protein. Characterization as a fatty acid- and retinoic acid-binding protein.</title>
        <authorList>
            <person name="Matarese V."/>
            <person name="Bernlohr D.A."/>
        </authorList>
    </citation>
    <scope>PROTEIN SEQUENCE OF 2-132</scope>
</reference>
<reference key="7">
    <citation type="journal article" date="1988" name="Proc. Natl. Acad. Sci. U.S.A.">
        <title>Expression of the differentiation-induced gene for fatty acid-binding protein is activated by glucocorticoid and cAMP.</title>
        <authorList>
            <person name="Cook J.S."/>
            <person name="Lucas J.J."/>
            <person name="Sibley E."/>
            <person name="Bolanowski M.A."/>
            <person name="Christy R.J."/>
            <person name="Kelly T.J. Jr."/>
            <person name="Lane M.D."/>
        </authorList>
    </citation>
    <scope>NUCLEOTIDE SEQUENCE [GENOMIC DNA] OF 1-11</scope>
</reference>
<reference key="8">
    <citation type="journal article" date="1985" name="J. Cell Biol.">
        <title>Developmentally regulated mRNAs in 3T3-adipocytes: analysis of transcriptional control.</title>
        <authorList>
            <person name="Cook K.S."/>
            <person name="Hunt C.R."/>
            <person name="Spiegelman B.M."/>
        </authorList>
    </citation>
    <scope>NUCLEOTIDE SEQUENCE [MRNA] OF 11-132</scope>
</reference>
<reference key="9">
    <citation type="journal article" date="1993" name="Biochem. Biophys. Res. Commun.">
        <title>Expression of fatty acid-binding proteins in the developing mouse mammary gland.</title>
        <authorList>
            <person name="Bansal M.P."/>
            <person name="Medina D."/>
        </authorList>
    </citation>
    <scope>PROTEIN SEQUENCE OF 25-35; 37-51 AND 59-88</scope>
    <source>
        <tissue>Mammary gland</tissue>
    </source>
</reference>
<reference key="10">
    <citation type="journal article" date="2002" name="Mol. Cell. Biol.">
        <title>Selective cooperation between fatty acid binding proteins and peroxisome proliferator-activated receptors in regulating transcription.</title>
        <authorList>
            <person name="Tan N.-S."/>
            <person name="Shaw N.S."/>
            <person name="Vinckenbosch N."/>
            <person name="Liu P."/>
            <person name="Yasmin R."/>
            <person name="Desvergne B."/>
            <person name="Wahli W."/>
            <person name="Noy N."/>
        </authorList>
    </citation>
    <scope>FUNCTION</scope>
    <scope>SUBCELLULAR LOCATION</scope>
    <scope>INTERACTION WITH PPARG</scope>
</reference>
<reference key="11">
    <citation type="journal article" date="2006" name="Biochim. Biophys. Acta">
        <title>Adipocyte-type fatty acid-binding protein as inter-compartmental shuttle for peroxisome proliferator activated receptor gamma agonists in cultured cell.</title>
        <authorList>
            <person name="Adida A."/>
            <person name="Spener F."/>
        </authorList>
    </citation>
    <scope>FUNCTION</scope>
    <scope>SUBCELLULAR LOCATION</scope>
    <scope>INTERACTION WITH PPARG</scope>
</reference>
<reference key="12">
    <citation type="journal article" date="2007" name="Biochemistry">
        <title>Continuous nucleocytoplasmic shuttling underlies transcriptional activation of PPARgamma by FABP4.</title>
        <authorList>
            <person name="Ayers S.D."/>
            <person name="Nedrow K.L."/>
            <person name="Gillilan R.E."/>
            <person name="Noy N."/>
        </authorList>
    </citation>
    <scope>FUNCTION</scope>
    <scope>SUBCELLULAR LOCATION</scope>
    <scope>MUTAGENESIS OF LYS-22; ARG-31; LYS-32; LEU-67; LEU-87 AND LEU-92</scope>
</reference>
<reference key="13">
    <citation type="journal article" date="2010" name="Cell">
        <title>A tissue-specific atlas of mouse protein phosphorylation and expression.</title>
        <authorList>
            <person name="Huttlin E.L."/>
            <person name="Jedrychowski M.P."/>
            <person name="Elias J.E."/>
            <person name="Goswami T."/>
            <person name="Rad R."/>
            <person name="Beausoleil S.A."/>
            <person name="Villen J."/>
            <person name="Haas W."/>
            <person name="Sowa M.E."/>
            <person name="Gygi S.P."/>
        </authorList>
    </citation>
    <scope>PHOSPHORYLATION [LARGE SCALE ANALYSIS] AT SER-13</scope>
    <scope>IDENTIFICATION BY MASS SPECTROMETRY [LARGE SCALE ANALYSIS]</scope>
    <source>
        <tissue>Brain</tissue>
        <tissue>Brown adipose tissue</tissue>
        <tissue>Heart</tissue>
        <tissue>Kidney</tissue>
        <tissue>Liver</tissue>
        <tissue>Lung</tissue>
        <tissue>Pancreas</tissue>
        <tissue>Spleen</tissue>
        <tissue>Testis</tissue>
    </source>
</reference>
<reference key="14">
    <citation type="journal article" date="1992" name="Biochemistry">
        <title>Crystal structure of recombinant murine adipocyte lipid-binding protein.</title>
        <authorList>
            <person name="Xu Z."/>
            <person name="Bernlohr D.A."/>
            <person name="Banaszak L.J."/>
        </authorList>
    </citation>
    <scope>X-RAY CRYSTALLOGRAPHY (2.5 ANGSTROMS)</scope>
</reference>
<reference key="15">
    <citation type="journal article" date="1993" name="J. Biol. Chem.">
        <title>The adipocyte lipid-binding protein at 1.6-A resolution. Crystal structures of the apoprotein and with bound saturated and unsaturated fatty acids.</title>
        <authorList>
            <person name="Xu Z."/>
            <person name="Bernlohr D.A."/>
            <person name="Banaszak L.J."/>
        </authorList>
    </citation>
    <scope>X-RAY CRYSTALLOGRAPHY (1.6 ANGSTROMS)</scope>
</reference>
<reference key="16">
    <citation type="journal article" date="1999" name="Biophys. J.">
        <title>Studies of the ligand binding reaction of adipocyte lipid binding protein using the fluorescent probe 1, 8-anilinonaphthalene-8-sulfonate.</title>
        <authorList>
            <person name="Ory J.J."/>
            <person name="Banaszak L.J."/>
        </authorList>
    </citation>
    <scope>X-RAY CRYSTALLOGRAPHY (2.5 ANGSTROMS)</scope>
</reference>
<reference key="17">
    <citation type="journal article" date="1994" name="Biochemistry">
        <title>X-ray crystallographic structures of adipocyte lipid-binding protein complexed with palmitate and hexadecanesulfonic acid. Properties of cavity binding sites.</title>
        <authorList>
            <person name="LaLonde J.M."/>
            <person name="Bernlohr D.A."/>
            <person name="Banaszak L.J."/>
        </authorList>
    </citation>
    <scope>X-RAY CRYSTALLOGRAPHY (1.6 ANGSTROMS) IN COMPLEX WITH FATTY ACID</scope>
</reference>
<reference key="18">
    <citation type="journal article" date="1994" name="J. Biol. Chem.">
        <title>Adipocyte lipid-binding protein complexed with arachidonic acid. Titration calorimetry and X-ray crystallographic studies.</title>
        <authorList>
            <person name="LaLonde J.M."/>
            <person name="Levenson M.A."/>
            <person name="Roe J.J."/>
            <person name="Bernlohr D.A."/>
            <person name="Banaszak L.J."/>
        </authorList>
    </citation>
    <scope>X-RAY CRYSTALLOGRAPHY (1.6 ANGSTROMS) IN COMPLEX WITH FATTY ACID</scope>
</reference>
<reference key="19">
    <citation type="journal article" date="2004" name="J. Lipid Res.">
        <title>Specificity determinants for lipids bound to beta-barrel proteins.</title>
        <authorList>
            <person name="Reese A.J."/>
            <person name="Banaszak L.J."/>
        </authorList>
    </citation>
    <scope>X-RAY CRYSTALLOGRAPHY (1.5 ANGSTROMS) IN COMPLEX WITH FATTY ACID</scope>
</reference>
<reference key="20">
    <citation type="journal article" date="2007" name="J. Mol. Biol.">
        <title>Structural basis for activation of fatty acid-binding protein 4.</title>
        <authorList>
            <person name="Gillilan R.E."/>
            <person name="Ayers S.D."/>
            <person name="Noy N."/>
        </authorList>
    </citation>
    <scope>X-RAY CRYSTALLOGRAPHY (2.3 ANGSTROMS) IN COMPLEXES WITH TROGLITAZONE AND LINOLEIC ACID</scope>
    <scope>SUBUNIT</scope>
    <scope>SUBCELLULAR LOCATION</scope>
    <scope>MUTAGENESIS OF PHE-58; LEU-67; LEU-87 AND LEU-92</scope>
</reference>
<protein>
    <recommendedName>
        <fullName>Fatty acid-binding protein, adipocyte</fullName>
    </recommendedName>
    <alternativeName>
        <fullName>3T3-L1 lipid-binding protein</fullName>
    </alternativeName>
    <alternativeName>
        <fullName>Adipocyte lipid-binding protein</fullName>
        <shortName>ALBP</shortName>
    </alternativeName>
    <alternativeName>
        <fullName>Adipocyte-type fatty acid-binding protein</fullName>
        <shortName>A-FABP</shortName>
        <shortName>AFABP</shortName>
    </alternativeName>
    <alternativeName>
        <fullName>Fatty acid-binding protein 4</fullName>
    </alternativeName>
    <alternativeName>
        <fullName>Myelin P2 protein homolog</fullName>
    </alternativeName>
    <alternativeName>
        <fullName>P15</fullName>
    </alternativeName>
    <alternativeName>
        <fullName>P2 adipocyte protein</fullName>
    </alternativeName>
    <alternativeName>
        <fullName>Protein 422</fullName>
    </alternativeName>
</protein>
<dbReference type="EMBL" id="K02109">
    <property type="protein sequence ID" value="AAA39416.1"/>
    <property type="molecule type" value="mRNA"/>
</dbReference>
<dbReference type="EMBL" id="M13264">
    <property type="protein sequence ID" value="AAA39870.1"/>
    <property type="molecule type" value="Genomic_DNA"/>
</dbReference>
<dbReference type="EMBL" id="M13261">
    <property type="protein sequence ID" value="AAA39870.1"/>
    <property type="status" value="JOINED"/>
    <property type="molecule type" value="Genomic_DNA"/>
</dbReference>
<dbReference type="EMBL" id="M13262">
    <property type="protein sequence ID" value="AAA39870.1"/>
    <property type="status" value="JOINED"/>
    <property type="molecule type" value="Genomic_DNA"/>
</dbReference>
<dbReference type="EMBL" id="M13263">
    <property type="protein sequence ID" value="AAA39870.1"/>
    <property type="status" value="JOINED"/>
    <property type="molecule type" value="Genomic_DNA"/>
</dbReference>
<dbReference type="EMBL" id="M13385">
    <property type="protein sequence ID" value="AAA39417.1"/>
    <property type="molecule type" value="Genomic_DNA"/>
</dbReference>
<dbReference type="EMBL" id="AK003143">
    <property type="protein sequence ID" value="BAB22601.1"/>
    <property type="molecule type" value="mRNA"/>
</dbReference>
<dbReference type="EMBL" id="BC054426">
    <property type="protein sequence ID" value="AAH54426.1"/>
    <property type="molecule type" value="mRNA"/>
</dbReference>
<dbReference type="EMBL" id="M20497">
    <property type="protein sequence ID" value="AAA37188.1"/>
    <property type="molecule type" value="Genomic_DNA"/>
</dbReference>
<dbReference type="EMBL" id="M28726">
    <property type="protein sequence ID" value="AAA37112.1"/>
    <property type="molecule type" value="mRNA"/>
</dbReference>
<dbReference type="CCDS" id="CCDS17238.1"/>
<dbReference type="PIR" id="B25952">
    <property type="entry name" value="B25952"/>
</dbReference>
<dbReference type="RefSeq" id="NP_077717.1">
    <property type="nucleotide sequence ID" value="NM_024406.4"/>
</dbReference>
<dbReference type="PDB" id="1A18">
    <property type="method" value="X-ray"/>
    <property type="resolution" value="2.40 A"/>
    <property type="chains" value="A=2-132"/>
</dbReference>
<dbReference type="PDB" id="1A2D">
    <property type="method" value="X-ray"/>
    <property type="resolution" value="2.40 A"/>
    <property type="chains" value="A/B=2-132"/>
</dbReference>
<dbReference type="PDB" id="1AB0">
    <property type="method" value="X-ray"/>
    <property type="resolution" value="1.90 A"/>
    <property type="chains" value="A=3-132"/>
</dbReference>
<dbReference type="PDB" id="1ACD">
    <property type="method" value="X-ray"/>
    <property type="resolution" value="2.70 A"/>
    <property type="chains" value="A=3-132"/>
</dbReference>
<dbReference type="PDB" id="1ADL">
    <property type="method" value="X-ray"/>
    <property type="resolution" value="1.60 A"/>
    <property type="chains" value="A=2-132"/>
</dbReference>
<dbReference type="PDB" id="1ALB">
    <property type="method" value="X-ray"/>
    <property type="resolution" value="2.50 A"/>
    <property type="chains" value="A=2-132"/>
</dbReference>
<dbReference type="PDB" id="1G74">
    <property type="method" value="X-ray"/>
    <property type="resolution" value="1.70 A"/>
    <property type="chains" value="A=2-132"/>
</dbReference>
<dbReference type="PDB" id="1G7N">
    <property type="method" value="X-ray"/>
    <property type="resolution" value="1.50 A"/>
    <property type="chains" value="A=2-132"/>
</dbReference>
<dbReference type="PDB" id="1LIB">
    <property type="method" value="X-ray"/>
    <property type="resolution" value="1.70 A"/>
    <property type="chains" value="A=2-132"/>
</dbReference>
<dbReference type="PDB" id="1LIC">
    <property type="method" value="X-ray"/>
    <property type="resolution" value="1.60 A"/>
    <property type="chains" value="A=2-132"/>
</dbReference>
<dbReference type="PDB" id="1LID">
    <property type="method" value="X-ray"/>
    <property type="resolution" value="1.60 A"/>
    <property type="chains" value="A=2-132"/>
</dbReference>
<dbReference type="PDB" id="1LIE">
    <property type="method" value="X-ray"/>
    <property type="resolution" value="1.60 A"/>
    <property type="chains" value="A=2-132"/>
</dbReference>
<dbReference type="PDB" id="1LIF">
    <property type="method" value="X-ray"/>
    <property type="resolution" value="1.60 A"/>
    <property type="chains" value="A=2-132"/>
</dbReference>
<dbReference type="PDB" id="2ANS">
    <property type="method" value="X-ray"/>
    <property type="resolution" value="2.50 A"/>
    <property type="chains" value="A/B=2-132"/>
</dbReference>
<dbReference type="PDB" id="2Q9S">
    <property type="method" value="X-ray"/>
    <property type="resolution" value="2.30 A"/>
    <property type="chains" value="A=1-132"/>
</dbReference>
<dbReference type="PDB" id="2QM9">
    <property type="method" value="X-ray"/>
    <property type="resolution" value="2.31 A"/>
    <property type="chains" value="A/B=1-132"/>
</dbReference>
<dbReference type="PDB" id="3HK1">
    <property type="method" value="X-ray"/>
    <property type="resolution" value="1.70 A"/>
    <property type="chains" value="A=2-132"/>
</dbReference>
<dbReference type="PDB" id="3JS1">
    <property type="method" value="X-ray"/>
    <property type="resolution" value="1.81 A"/>
    <property type="chains" value="A/B=2-132"/>
</dbReference>
<dbReference type="PDB" id="3JSQ">
    <property type="method" value="X-ray"/>
    <property type="resolution" value="2.30 A"/>
    <property type="chains" value="A=2-132"/>
</dbReference>
<dbReference type="PDB" id="5C0N">
    <property type="method" value="X-ray"/>
    <property type="resolution" value="3.00 A"/>
    <property type="chains" value="A/B=1-132"/>
</dbReference>
<dbReference type="PDB" id="5D8J">
    <property type="method" value="X-ray"/>
    <property type="resolution" value="3.00 A"/>
    <property type="chains" value="A=1-132"/>
</dbReference>
<dbReference type="PDB" id="7FWT">
    <property type="method" value="X-ray"/>
    <property type="resolution" value="1.54 A"/>
    <property type="chains" value="A/B=1-132"/>
</dbReference>
<dbReference type="PDB" id="7FZG">
    <property type="method" value="X-ray"/>
    <property type="resolution" value="1.49 A"/>
    <property type="chains" value="A=1-132"/>
</dbReference>
<dbReference type="PDBsum" id="1A18"/>
<dbReference type="PDBsum" id="1A2D"/>
<dbReference type="PDBsum" id="1AB0"/>
<dbReference type="PDBsum" id="1ACD"/>
<dbReference type="PDBsum" id="1ADL"/>
<dbReference type="PDBsum" id="1ALB"/>
<dbReference type="PDBsum" id="1G74"/>
<dbReference type="PDBsum" id="1G7N"/>
<dbReference type="PDBsum" id="1LIB"/>
<dbReference type="PDBsum" id="1LIC"/>
<dbReference type="PDBsum" id="1LID"/>
<dbReference type="PDBsum" id="1LIE"/>
<dbReference type="PDBsum" id="1LIF"/>
<dbReference type="PDBsum" id="2ANS"/>
<dbReference type="PDBsum" id="2Q9S"/>
<dbReference type="PDBsum" id="2QM9"/>
<dbReference type="PDBsum" id="3HK1"/>
<dbReference type="PDBsum" id="3JS1"/>
<dbReference type="PDBsum" id="3JSQ"/>
<dbReference type="PDBsum" id="5C0N"/>
<dbReference type="PDBsum" id="5D8J"/>
<dbReference type="PDBsum" id="7FWT"/>
<dbReference type="PDBsum" id="7FZG"/>
<dbReference type="SMR" id="P04117"/>
<dbReference type="BioGRID" id="198128">
    <property type="interactions" value="4"/>
</dbReference>
<dbReference type="FunCoup" id="P04117">
    <property type="interactions" value="1332"/>
</dbReference>
<dbReference type="STRING" id="10090.ENSMUSP00000029041"/>
<dbReference type="ChEMBL" id="CHEMBL1075118"/>
<dbReference type="GuidetoPHARMACOLOGY" id="2534"/>
<dbReference type="CarbonylDB" id="P04117"/>
<dbReference type="GlyGen" id="P04117">
    <property type="glycosylation" value="1 site, 1 O-linked glycan (1 site)"/>
</dbReference>
<dbReference type="iPTMnet" id="P04117"/>
<dbReference type="MetOSite" id="P04117"/>
<dbReference type="PhosphoSitePlus" id="P04117"/>
<dbReference type="jPOST" id="P04117"/>
<dbReference type="PaxDb" id="10090-ENSMUSP00000029041"/>
<dbReference type="PeptideAtlas" id="P04117"/>
<dbReference type="ProteomicsDB" id="271547"/>
<dbReference type="Pumba" id="P04117"/>
<dbReference type="ABCD" id="P04117">
    <property type="antibodies" value="2 sequenced antibodies"/>
</dbReference>
<dbReference type="Antibodypedia" id="994">
    <property type="antibodies" value="887 antibodies from 46 providers"/>
</dbReference>
<dbReference type="DNASU" id="11770"/>
<dbReference type="Ensembl" id="ENSMUST00000029041.6">
    <property type="protein sequence ID" value="ENSMUSP00000029041.5"/>
    <property type="gene ID" value="ENSMUSG00000062515.4"/>
</dbReference>
<dbReference type="GeneID" id="11770"/>
<dbReference type="KEGG" id="mmu:11770"/>
<dbReference type="UCSC" id="uc008opl.2">
    <property type="organism name" value="mouse"/>
</dbReference>
<dbReference type="AGR" id="MGI:88038"/>
<dbReference type="CTD" id="2167"/>
<dbReference type="MGI" id="MGI:88038">
    <property type="gene designation" value="Fabp4"/>
</dbReference>
<dbReference type="VEuPathDB" id="HostDB:ENSMUSG00000062515"/>
<dbReference type="eggNOG" id="KOG4015">
    <property type="taxonomic scope" value="Eukaryota"/>
</dbReference>
<dbReference type="GeneTree" id="ENSGT00940000160340"/>
<dbReference type="HOGENOM" id="CLU_113772_0_0_1"/>
<dbReference type="InParanoid" id="P04117"/>
<dbReference type="OMA" id="CIMGDVI"/>
<dbReference type="OrthoDB" id="412780at2759"/>
<dbReference type="PhylomeDB" id="P04117"/>
<dbReference type="TreeFam" id="TF316894"/>
<dbReference type="Reactome" id="R-MMU-163560">
    <property type="pathway name" value="Triglyceride catabolism"/>
</dbReference>
<dbReference type="BioGRID-ORCS" id="11770">
    <property type="hits" value="3 hits in 79 CRISPR screens"/>
</dbReference>
<dbReference type="ChiTaRS" id="Fabp4">
    <property type="organism name" value="mouse"/>
</dbReference>
<dbReference type="EvolutionaryTrace" id="P04117"/>
<dbReference type="PRO" id="PR:P04117"/>
<dbReference type="Proteomes" id="UP000000589">
    <property type="component" value="Chromosome 3"/>
</dbReference>
<dbReference type="RNAct" id="P04117">
    <property type="molecule type" value="protein"/>
</dbReference>
<dbReference type="Bgee" id="ENSMUSG00000062515">
    <property type="expression patterns" value="Expressed in intercostal muscle and 186 other cell types or tissues"/>
</dbReference>
<dbReference type="ExpressionAtlas" id="P04117">
    <property type="expression patterns" value="baseline and differential"/>
</dbReference>
<dbReference type="GO" id="GO:0005737">
    <property type="term" value="C:cytoplasm"/>
    <property type="evidence" value="ECO:0000314"/>
    <property type="project" value="UniProtKB"/>
</dbReference>
<dbReference type="GO" id="GO:0005654">
    <property type="term" value="C:nucleoplasm"/>
    <property type="evidence" value="ECO:0000304"/>
    <property type="project" value="Reactome"/>
</dbReference>
<dbReference type="GO" id="GO:0005634">
    <property type="term" value="C:nucleus"/>
    <property type="evidence" value="ECO:0000314"/>
    <property type="project" value="UniProtKB"/>
</dbReference>
<dbReference type="GO" id="GO:0051427">
    <property type="term" value="F:hormone receptor binding"/>
    <property type="evidence" value="ECO:0000353"/>
    <property type="project" value="UniProtKB"/>
</dbReference>
<dbReference type="GO" id="GO:0036041">
    <property type="term" value="F:long-chain fatty acid binding"/>
    <property type="evidence" value="ECO:0000314"/>
    <property type="project" value="UniProtKB"/>
</dbReference>
<dbReference type="GO" id="GO:0005324">
    <property type="term" value="F:long-chain fatty acid transmembrane transporter activity"/>
    <property type="evidence" value="ECO:0000314"/>
    <property type="project" value="UniProtKB"/>
</dbReference>
<dbReference type="GO" id="GO:0050873">
    <property type="term" value="P:brown fat cell differentiation"/>
    <property type="evidence" value="ECO:0000314"/>
    <property type="project" value="MGI"/>
</dbReference>
<dbReference type="GO" id="GO:0071285">
    <property type="term" value="P:cellular response to lithium ion"/>
    <property type="evidence" value="ECO:0000314"/>
    <property type="project" value="MGI"/>
</dbReference>
<dbReference type="GO" id="GO:0071356">
    <property type="term" value="P:cellular response to tumor necrosis factor"/>
    <property type="evidence" value="ECO:0000314"/>
    <property type="project" value="MGI"/>
</dbReference>
<dbReference type="GO" id="GO:0042632">
    <property type="term" value="P:cholesterol homeostasis"/>
    <property type="evidence" value="ECO:0000315"/>
    <property type="project" value="MGI"/>
</dbReference>
<dbReference type="GO" id="GO:0015909">
    <property type="term" value="P:long-chain fatty acid transport"/>
    <property type="evidence" value="ECO:0000314"/>
    <property type="project" value="UniProtKB"/>
</dbReference>
<dbReference type="GO" id="GO:0045892">
    <property type="term" value="P:negative regulation of DNA-templated transcription"/>
    <property type="evidence" value="ECO:0000315"/>
    <property type="project" value="MGI"/>
</dbReference>
<dbReference type="GO" id="GO:0120162">
    <property type="term" value="P:positive regulation of cold-induced thermogenesis"/>
    <property type="evidence" value="ECO:0000316"/>
    <property type="project" value="YuBioLab"/>
</dbReference>
<dbReference type="GO" id="GO:0050729">
    <property type="term" value="P:positive regulation of inflammatory response"/>
    <property type="evidence" value="ECO:0000315"/>
    <property type="project" value="MGI"/>
</dbReference>
<dbReference type="GO" id="GO:0009617">
    <property type="term" value="P:response to bacterium"/>
    <property type="evidence" value="ECO:0000270"/>
    <property type="project" value="MGI"/>
</dbReference>
<dbReference type="GO" id="GO:0050872">
    <property type="term" value="P:white fat cell differentiation"/>
    <property type="evidence" value="ECO:0000314"/>
    <property type="project" value="MGI"/>
</dbReference>
<dbReference type="CDD" id="cd19467">
    <property type="entry name" value="FABP4"/>
    <property type="match status" value="1"/>
</dbReference>
<dbReference type="FunFam" id="2.40.128.20:FF:000001">
    <property type="entry name" value="Fatty acid-binding protein, adipocyte"/>
    <property type="match status" value="1"/>
</dbReference>
<dbReference type="Gene3D" id="2.40.128.20">
    <property type="match status" value="1"/>
</dbReference>
<dbReference type="InterPro" id="IPR012674">
    <property type="entry name" value="Calycin"/>
</dbReference>
<dbReference type="InterPro" id="IPR000463">
    <property type="entry name" value="Fatty_acid-bd"/>
</dbReference>
<dbReference type="InterPro" id="IPR031259">
    <property type="entry name" value="ILBP"/>
</dbReference>
<dbReference type="InterPro" id="IPR000566">
    <property type="entry name" value="Lipocln_cytosolic_FA-bd_dom"/>
</dbReference>
<dbReference type="PANTHER" id="PTHR11955">
    <property type="entry name" value="FATTY ACID BINDING PROTEIN"/>
    <property type="match status" value="1"/>
</dbReference>
<dbReference type="Pfam" id="PF00061">
    <property type="entry name" value="Lipocalin"/>
    <property type="match status" value="1"/>
</dbReference>
<dbReference type="PRINTS" id="PR00178">
    <property type="entry name" value="FATTYACIDBP"/>
</dbReference>
<dbReference type="SUPFAM" id="SSF50814">
    <property type="entry name" value="Lipocalins"/>
    <property type="match status" value="1"/>
</dbReference>
<dbReference type="PROSITE" id="PS00214">
    <property type="entry name" value="FABP"/>
    <property type="match status" value="1"/>
</dbReference>
<evidence type="ECO:0000250" key="1"/>
<evidence type="ECO:0000250" key="2">
    <source>
        <dbReference type="UniProtKB" id="P15090"/>
    </source>
</evidence>
<evidence type="ECO:0000269" key="3">
    <source>
    </source>
</evidence>
<evidence type="ECO:0000269" key="4">
    <source>
    </source>
</evidence>
<evidence type="ECO:0000269" key="5">
    <source>
    </source>
</evidence>
<evidence type="ECO:0000269" key="6">
    <source>
    </source>
</evidence>
<evidence type="ECO:0000269" key="7">
    <source>
    </source>
</evidence>
<evidence type="ECO:0000269" key="8">
    <source>
    </source>
</evidence>
<evidence type="ECO:0000269" key="9">
    <source>
    </source>
</evidence>
<evidence type="ECO:0000269" key="10">
    <source>
    </source>
</evidence>
<evidence type="ECO:0000305" key="11"/>
<evidence type="ECO:0007744" key="12">
    <source>
    </source>
</evidence>
<evidence type="ECO:0007829" key="13">
    <source>
        <dbReference type="PDB" id="5D8J"/>
    </source>
</evidence>
<evidence type="ECO:0007829" key="14">
    <source>
        <dbReference type="PDB" id="7FZG"/>
    </source>
</evidence>
<keyword id="KW-0002">3D-structure</keyword>
<keyword id="KW-0007">Acetylation</keyword>
<keyword id="KW-0963">Cytoplasm</keyword>
<keyword id="KW-0903">Direct protein sequencing</keyword>
<keyword id="KW-0446">Lipid-binding</keyword>
<keyword id="KW-0539">Nucleus</keyword>
<keyword id="KW-0597">Phosphoprotein</keyword>
<keyword id="KW-1185">Reference proteome</keyword>
<keyword id="KW-0813">Transport</keyword>
<proteinExistence type="evidence at protein level"/>
<accession>P04117</accession>
<gene>
    <name type="primary">Fabp4</name>
    <name type="synonym">Ap2</name>
</gene>
<comment type="function">
    <text evidence="3 5 6">Lipid transport protein in adipocytes. Binds both long chain fatty acids and retinoic acid. Delivers long-chain fatty acids and retinoic acid to their cognate receptors in the nucleus.</text>
</comment>
<comment type="subunit">
    <text evidence="1 3 4 5 7 9 10">Monomer (By similarity). Homodimer. Interacts with PPARG.</text>
</comment>
<comment type="subcellular location">
    <subcellularLocation>
        <location evidence="6 7">Cytoplasm</location>
    </subcellularLocation>
    <subcellularLocation>
        <location evidence="6 7">Nucleus</location>
    </subcellularLocation>
    <text evidence="6 7">Depending on the nature of the ligand, a conformation change exposes a nuclear localization motif and the protein is transported into the nucleus (PubMed:17516629). Subject to constitutive nuclear export (PubMed:17516629, PubMed:17761196).</text>
</comment>
<comment type="domain">
    <text>Forms a beta-barrel structure that accommodates the hydrophobic ligand in its interior.</text>
</comment>
<comment type="similarity">
    <text evidence="11">Belongs to the calycin superfamily. Fatty-acid binding protein (FABP) family.</text>
</comment>
<sequence>MCDAFVGTWKLVSSENFDDYMKEVGVGFATRKVAGMAKPNMIISVNGDLVTIRSESTFKNTEISFKLGVEFDEITADDRKVKSIITLDGGALVQVQKWDGKSTTIKRKRDGDKLVVECVMKGVTSTRVYERA</sequence>
<name>FABP4_MOUSE</name>